<reference key="1">
    <citation type="journal article" date="2009" name="J. Bacteriol.">
        <title>Genome sequences of three Agrobacterium biovars help elucidate the evolution of multichromosome genomes in bacteria.</title>
        <authorList>
            <person name="Slater S.C."/>
            <person name="Goldman B.S."/>
            <person name="Goodner B."/>
            <person name="Setubal J.C."/>
            <person name="Farrand S.K."/>
            <person name="Nester E.W."/>
            <person name="Burr T.J."/>
            <person name="Banta L."/>
            <person name="Dickerman A.W."/>
            <person name="Paulsen I."/>
            <person name="Otten L."/>
            <person name="Suen G."/>
            <person name="Welch R."/>
            <person name="Almeida N.F."/>
            <person name="Arnold F."/>
            <person name="Burton O.T."/>
            <person name="Du Z."/>
            <person name="Ewing A."/>
            <person name="Godsy E."/>
            <person name="Heisel S."/>
            <person name="Houmiel K.L."/>
            <person name="Jhaveri J."/>
            <person name="Lu J."/>
            <person name="Miller N.M."/>
            <person name="Norton S."/>
            <person name="Chen Q."/>
            <person name="Phoolcharoen W."/>
            <person name="Ohlin V."/>
            <person name="Ondrusek D."/>
            <person name="Pride N."/>
            <person name="Stricklin S.L."/>
            <person name="Sun J."/>
            <person name="Wheeler C."/>
            <person name="Wilson L."/>
            <person name="Zhu H."/>
            <person name="Wood D.W."/>
        </authorList>
    </citation>
    <scope>NUCLEOTIDE SEQUENCE [LARGE SCALE GENOMIC DNA]</scope>
    <source>
        <strain>ATCC BAA-846 / DSM 112012 / S4</strain>
    </source>
</reference>
<feature type="chain" id="PRO_1000192151" description="DNA mismatch repair protein MutL">
    <location>
        <begin position="1"/>
        <end position="617"/>
    </location>
</feature>
<feature type="region of interest" description="Disordered" evidence="2">
    <location>
        <begin position="363"/>
        <end position="394"/>
    </location>
</feature>
<feature type="compositionally biased region" description="Basic and acidic residues" evidence="2">
    <location>
        <begin position="382"/>
        <end position="392"/>
    </location>
</feature>
<gene>
    <name evidence="1" type="primary">mutL</name>
    <name type="ordered locus">Avi_0895</name>
</gene>
<accession>B9JSD6</accession>
<comment type="function">
    <text evidence="1">This protein is involved in the repair of mismatches in DNA. It is required for dam-dependent methyl-directed DNA mismatch repair. May act as a 'molecular matchmaker', a protein that promotes the formation of a stable complex between two or more DNA-binding proteins in an ATP-dependent manner without itself being part of a final effector complex.</text>
</comment>
<comment type="similarity">
    <text evidence="1">Belongs to the DNA mismatch repair MutL/HexB family.</text>
</comment>
<organism>
    <name type="scientific">Allorhizobium ampelinum (strain ATCC BAA-846 / DSM 112012 / S4)</name>
    <name type="common">Agrobacterium vitis (strain S4)</name>
    <dbReference type="NCBI Taxonomy" id="311402"/>
    <lineage>
        <taxon>Bacteria</taxon>
        <taxon>Pseudomonadati</taxon>
        <taxon>Pseudomonadota</taxon>
        <taxon>Alphaproteobacteria</taxon>
        <taxon>Hyphomicrobiales</taxon>
        <taxon>Rhizobiaceae</taxon>
        <taxon>Rhizobium/Agrobacterium group</taxon>
        <taxon>Allorhizobium</taxon>
        <taxon>Allorhizobium ampelinum</taxon>
    </lineage>
</organism>
<evidence type="ECO:0000255" key="1">
    <source>
        <dbReference type="HAMAP-Rule" id="MF_00149"/>
    </source>
</evidence>
<evidence type="ECO:0000256" key="2">
    <source>
        <dbReference type="SAM" id="MobiDB-lite"/>
    </source>
</evidence>
<sequence>MSIKQLSETLINQIAAGEVIERPASAAKELIENAIDAGASRIEIATAGGGKALLRITDNGCGMDGQDLALAVRRHCTSKLNESLMDIKSLGFRGEALPSIGSVARLTIASRRADSASAFQIAVEGGKVGEVRPAPGNPGTVVEVRDLFFATPARLKFLKTERAEAAAITEMVKRMAIAFPKIRFVLSGSDRSTLELPATGDDHLARIAQVLGPDFRDNAIALDAEREDVHLGGFAGVPTFNRGNSAHQYAFVNGRPVQDKLILSAIRGAYAETVPHGRYPVAVLALTVDPALVDVNVHPAKSDVRFRDPGLVRGLIVGAIRQSLTREGDRSSTAGAGAMLRAFRPGANGGFSEGAQAAANNSYAPAYGARPPQPSAWSVDTSPHRPLDDGQNRFDGLALPAARADAHVSPSQISEPVAMAMESGRFRLGAARAQVHANYIVAQTQDGLVIVDQHAAHERLVFEDMRKALSGRRLPSQGLLIPEIIGLPEEDCDRLMDHAENLDRLGLAIERFGPGAIAVRETPAMLGEVDVPGLVRQLADEIAEWETAGSLFARLEHVAATMACHGSVRSGRLLRVEEMNALLRKMEETPGSGQCNHGRPTYIELKLSDIERLFGRS</sequence>
<proteinExistence type="inferred from homology"/>
<keyword id="KW-0227">DNA damage</keyword>
<keyword id="KW-0234">DNA repair</keyword>
<keyword id="KW-1185">Reference proteome</keyword>
<name>MUTL_ALLAM</name>
<dbReference type="EMBL" id="CP000633">
    <property type="protein sequence ID" value="ACM35629.1"/>
    <property type="molecule type" value="Genomic_DNA"/>
</dbReference>
<dbReference type="RefSeq" id="WP_015915054.1">
    <property type="nucleotide sequence ID" value="NC_011989.1"/>
</dbReference>
<dbReference type="SMR" id="B9JSD6"/>
<dbReference type="STRING" id="311402.Avi_0895"/>
<dbReference type="KEGG" id="avi:Avi_0895"/>
<dbReference type="eggNOG" id="COG0323">
    <property type="taxonomic scope" value="Bacteria"/>
</dbReference>
<dbReference type="HOGENOM" id="CLU_004131_4_2_5"/>
<dbReference type="Proteomes" id="UP000001596">
    <property type="component" value="Chromosome 1"/>
</dbReference>
<dbReference type="GO" id="GO:0032300">
    <property type="term" value="C:mismatch repair complex"/>
    <property type="evidence" value="ECO:0007669"/>
    <property type="project" value="InterPro"/>
</dbReference>
<dbReference type="GO" id="GO:0005524">
    <property type="term" value="F:ATP binding"/>
    <property type="evidence" value="ECO:0007669"/>
    <property type="project" value="InterPro"/>
</dbReference>
<dbReference type="GO" id="GO:0016887">
    <property type="term" value="F:ATP hydrolysis activity"/>
    <property type="evidence" value="ECO:0007669"/>
    <property type="project" value="InterPro"/>
</dbReference>
<dbReference type="GO" id="GO:0140664">
    <property type="term" value="F:ATP-dependent DNA damage sensor activity"/>
    <property type="evidence" value="ECO:0007669"/>
    <property type="project" value="InterPro"/>
</dbReference>
<dbReference type="GO" id="GO:0030983">
    <property type="term" value="F:mismatched DNA binding"/>
    <property type="evidence" value="ECO:0007669"/>
    <property type="project" value="InterPro"/>
</dbReference>
<dbReference type="GO" id="GO:0006298">
    <property type="term" value="P:mismatch repair"/>
    <property type="evidence" value="ECO:0007669"/>
    <property type="project" value="UniProtKB-UniRule"/>
</dbReference>
<dbReference type="CDD" id="cd16926">
    <property type="entry name" value="HATPase_MutL-MLH-PMS-like"/>
    <property type="match status" value="1"/>
</dbReference>
<dbReference type="CDD" id="cd00782">
    <property type="entry name" value="MutL_Trans"/>
    <property type="match status" value="1"/>
</dbReference>
<dbReference type="FunFam" id="3.30.565.10:FF:000003">
    <property type="entry name" value="DNA mismatch repair endonuclease MutL"/>
    <property type="match status" value="1"/>
</dbReference>
<dbReference type="Gene3D" id="3.30.230.10">
    <property type="match status" value="1"/>
</dbReference>
<dbReference type="Gene3D" id="3.30.565.10">
    <property type="entry name" value="Histidine kinase-like ATPase, C-terminal domain"/>
    <property type="match status" value="1"/>
</dbReference>
<dbReference type="Gene3D" id="3.30.1540.20">
    <property type="entry name" value="MutL, C-terminal domain, dimerisation subdomain"/>
    <property type="match status" value="1"/>
</dbReference>
<dbReference type="Gene3D" id="3.30.1370.100">
    <property type="entry name" value="MutL, C-terminal domain, regulatory subdomain"/>
    <property type="match status" value="1"/>
</dbReference>
<dbReference type="HAMAP" id="MF_00149">
    <property type="entry name" value="DNA_mis_repair"/>
    <property type="match status" value="1"/>
</dbReference>
<dbReference type="InterPro" id="IPR014762">
    <property type="entry name" value="DNA_mismatch_repair_CS"/>
</dbReference>
<dbReference type="InterPro" id="IPR020667">
    <property type="entry name" value="DNA_mismatch_repair_MutL"/>
</dbReference>
<dbReference type="InterPro" id="IPR013507">
    <property type="entry name" value="DNA_mismatch_S5_2-like"/>
</dbReference>
<dbReference type="InterPro" id="IPR036890">
    <property type="entry name" value="HATPase_C_sf"/>
</dbReference>
<dbReference type="InterPro" id="IPR002099">
    <property type="entry name" value="MutL/Mlh/PMS"/>
</dbReference>
<dbReference type="InterPro" id="IPR038973">
    <property type="entry name" value="MutL/Mlh/Pms-like"/>
</dbReference>
<dbReference type="InterPro" id="IPR014790">
    <property type="entry name" value="MutL_C"/>
</dbReference>
<dbReference type="InterPro" id="IPR042120">
    <property type="entry name" value="MutL_C_dimsub"/>
</dbReference>
<dbReference type="InterPro" id="IPR042121">
    <property type="entry name" value="MutL_C_regsub"/>
</dbReference>
<dbReference type="InterPro" id="IPR037198">
    <property type="entry name" value="MutL_C_sf"/>
</dbReference>
<dbReference type="InterPro" id="IPR020568">
    <property type="entry name" value="Ribosomal_Su5_D2-typ_SF"/>
</dbReference>
<dbReference type="InterPro" id="IPR014721">
    <property type="entry name" value="Ribsml_uS5_D2-typ_fold_subgr"/>
</dbReference>
<dbReference type="NCBIfam" id="TIGR00585">
    <property type="entry name" value="mutl"/>
    <property type="match status" value="1"/>
</dbReference>
<dbReference type="NCBIfam" id="NF000953">
    <property type="entry name" value="PRK00095.2-4"/>
    <property type="match status" value="1"/>
</dbReference>
<dbReference type="PANTHER" id="PTHR10073">
    <property type="entry name" value="DNA MISMATCH REPAIR PROTEIN MLH, PMS, MUTL"/>
    <property type="match status" value="1"/>
</dbReference>
<dbReference type="PANTHER" id="PTHR10073:SF12">
    <property type="entry name" value="DNA MISMATCH REPAIR PROTEIN MLH1"/>
    <property type="match status" value="1"/>
</dbReference>
<dbReference type="Pfam" id="PF01119">
    <property type="entry name" value="DNA_mis_repair"/>
    <property type="match status" value="1"/>
</dbReference>
<dbReference type="Pfam" id="PF13589">
    <property type="entry name" value="HATPase_c_3"/>
    <property type="match status" value="1"/>
</dbReference>
<dbReference type="Pfam" id="PF08676">
    <property type="entry name" value="MutL_C"/>
    <property type="match status" value="1"/>
</dbReference>
<dbReference type="SMART" id="SM01340">
    <property type="entry name" value="DNA_mis_repair"/>
    <property type="match status" value="1"/>
</dbReference>
<dbReference type="SMART" id="SM00853">
    <property type="entry name" value="MutL_C"/>
    <property type="match status" value="1"/>
</dbReference>
<dbReference type="SUPFAM" id="SSF55874">
    <property type="entry name" value="ATPase domain of HSP90 chaperone/DNA topoisomerase II/histidine kinase"/>
    <property type="match status" value="1"/>
</dbReference>
<dbReference type="SUPFAM" id="SSF118116">
    <property type="entry name" value="DNA mismatch repair protein MutL"/>
    <property type="match status" value="1"/>
</dbReference>
<dbReference type="SUPFAM" id="SSF54211">
    <property type="entry name" value="Ribosomal protein S5 domain 2-like"/>
    <property type="match status" value="1"/>
</dbReference>
<dbReference type="PROSITE" id="PS00058">
    <property type="entry name" value="DNA_MISMATCH_REPAIR_1"/>
    <property type="match status" value="1"/>
</dbReference>
<protein>
    <recommendedName>
        <fullName evidence="1">DNA mismatch repair protein MutL</fullName>
    </recommendedName>
</protein>